<sequence length="538" mass="56745">MAKLIAFDQDAREGILRGVDALANAVKVTLGPRGRNVVLDKAFGGPLVTNDGVTIARDIDLEDPFENLGAQLVKSVAVKTNDIAGDGTTTATLLAQALIAEGLRNVAAGANPMELNKGISAAAEKTLEELKARATEVSDTKEIANVATVSSRDEVVGEIVAAAMEKVGKDGVVTVEESQSIETALEVTEGISFDKGYLSPYFINDNDTQQAVLDNPAVLLVRNKISSLPDFLPLLEKVVESNRPLLIIAEDVEGEPLQTLVVNSIRKTIKVVAVKSPYFGDRRKAFMDDLAIVTKATVVDPEVGINLNEAGEEVFGTARRITVSKDETIIVDGAGSAEDVEARRGQIRREIANTDSTWDREKAEERLAKLSGGIAVIRVGAATETEVNDRKLRVEDAINAARAAAQEGVIAGGGSALVQIAETLKAYAEEFEGDQKVGVRALATALGKPAYWIASNAGLDGSVVVARTAALPNGEGFNAATLEYGNLINDGVIDPVKVTHSAVVNATSVARMVLTTEASVVEKPAEEAADAHAGHHHH</sequence>
<proteinExistence type="inferred from homology"/>
<reference key="1">
    <citation type="journal article" date="2003" name="Appl. Microbiol. Biotechnol.">
        <title>The Corynebacterium glutamicum genome: features and impacts on biotechnological processes.</title>
        <authorList>
            <person name="Ikeda M."/>
            <person name="Nakagawa S."/>
        </authorList>
    </citation>
    <scope>NUCLEOTIDE SEQUENCE [LARGE SCALE GENOMIC DNA]</scope>
    <source>
        <strain>ATCC 13032 / DSM 20300 / JCM 1318 / BCRC 11384 / CCUG 27702 / LMG 3730 / NBRC 12168 / NCIMB 10025 / NRRL B-2784 / 534</strain>
    </source>
</reference>
<reference key="2">
    <citation type="journal article" date="2003" name="J. Biotechnol.">
        <title>The complete Corynebacterium glutamicum ATCC 13032 genome sequence and its impact on the production of L-aspartate-derived amino acids and vitamins.</title>
        <authorList>
            <person name="Kalinowski J."/>
            <person name="Bathe B."/>
            <person name="Bartels D."/>
            <person name="Bischoff N."/>
            <person name="Bott M."/>
            <person name="Burkovski A."/>
            <person name="Dusch N."/>
            <person name="Eggeling L."/>
            <person name="Eikmanns B.J."/>
            <person name="Gaigalat L."/>
            <person name="Goesmann A."/>
            <person name="Hartmann M."/>
            <person name="Huthmacher K."/>
            <person name="Kraemer R."/>
            <person name="Linke B."/>
            <person name="McHardy A.C."/>
            <person name="Meyer F."/>
            <person name="Moeckel B."/>
            <person name="Pfefferle W."/>
            <person name="Puehler A."/>
            <person name="Rey D.A."/>
            <person name="Rueckert C."/>
            <person name="Rupp O."/>
            <person name="Sahm H."/>
            <person name="Wendisch V.F."/>
            <person name="Wiegraebe I."/>
            <person name="Tauch A."/>
        </authorList>
    </citation>
    <scope>NUCLEOTIDE SEQUENCE [LARGE SCALE GENOMIC DNA] OF 113-538</scope>
    <source>
        <strain>ATCC 13032 / DSM 20300 / JCM 1318 / BCRC 11384 / CCUG 27702 / LMG 3730 / NBRC 12168 / NCIMB 10025 / NRRL B-2784 / 534</strain>
    </source>
</reference>
<dbReference type="EC" id="5.6.1.7" evidence="1"/>
<dbReference type="EMBL" id="BA000036">
    <property type="protein sequence ID" value="BAB97991.1"/>
    <property type="molecule type" value="Genomic_DNA"/>
</dbReference>
<dbReference type="EMBL" id="BX927149">
    <property type="protein sequence ID" value="CAF19305.1"/>
    <property type="molecule type" value="Genomic_DNA"/>
</dbReference>
<dbReference type="RefSeq" id="NP_599834.1">
    <property type="nucleotide sequence ID" value="NC_003450.3"/>
</dbReference>
<dbReference type="RefSeq" id="WP_011013754.1">
    <property type="nucleotide sequence ID" value="NC_003450.3"/>
</dbReference>
<dbReference type="SMR" id="Q8NSS0"/>
<dbReference type="STRING" id="196627.cg0693"/>
<dbReference type="GeneID" id="1018602"/>
<dbReference type="KEGG" id="cgb:cg0693"/>
<dbReference type="KEGG" id="cgl:Cgl0598"/>
<dbReference type="PATRIC" id="fig|196627.13.peg.589"/>
<dbReference type="eggNOG" id="COG0459">
    <property type="taxonomic scope" value="Bacteria"/>
</dbReference>
<dbReference type="HOGENOM" id="CLU_016503_3_0_11"/>
<dbReference type="OrthoDB" id="9766614at2"/>
<dbReference type="BioCyc" id="CORYNE:G18NG-10160-MONOMER"/>
<dbReference type="Proteomes" id="UP000000582">
    <property type="component" value="Chromosome"/>
</dbReference>
<dbReference type="Proteomes" id="UP000001009">
    <property type="component" value="Chromosome"/>
</dbReference>
<dbReference type="GO" id="GO:0005737">
    <property type="term" value="C:cytoplasm"/>
    <property type="evidence" value="ECO:0007669"/>
    <property type="project" value="UniProtKB-SubCell"/>
</dbReference>
<dbReference type="GO" id="GO:0005524">
    <property type="term" value="F:ATP binding"/>
    <property type="evidence" value="ECO:0007669"/>
    <property type="project" value="UniProtKB-UniRule"/>
</dbReference>
<dbReference type="GO" id="GO:0140662">
    <property type="term" value="F:ATP-dependent protein folding chaperone"/>
    <property type="evidence" value="ECO:0007669"/>
    <property type="project" value="InterPro"/>
</dbReference>
<dbReference type="GO" id="GO:0016853">
    <property type="term" value="F:isomerase activity"/>
    <property type="evidence" value="ECO:0007669"/>
    <property type="project" value="UniProtKB-KW"/>
</dbReference>
<dbReference type="GO" id="GO:0051082">
    <property type="term" value="F:unfolded protein binding"/>
    <property type="evidence" value="ECO:0007669"/>
    <property type="project" value="UniProtKB-UniRule"/>
</dbReference>
<dbReference type="GO" id="GO:0042026">
    <property type="term" value="P:protein refolding"/>
    <property type="evidence" value="ECO:0007669"/>
    <property type="project" value="UniProtKB-UniRule"/>
</dbReference>
<dbReference type="CDD" id="cd03344">
    <property type="entry name" value="GroEL"/>
    <property type="match status" value="1"/>
</dbReference>
<dbReference type="FunFam" id="3.50.7.10:FF:000001">
    <property type="entry name" value="60 kDa chaperonin"/>
    <property type="match status" value="1"/>
</dbReference>
<dbReference type="Gene3D" id="3.50.7.10">
    <property type="entry name" value="GroEL"/>
    <property type="match status" value="1"/>
</dbReference>
<dbReference type="Gene3D" id="1.10.560.10">
    <property type="entry name" value="GroEL-like equatorial domain"/>
    <property type="match status" value="1"/>
</dbReference>
<dbReference type="Gene3D" id="3.30.260.10">
    <property type="entry name" value="TCP-1-like chaperonin intermediate domain"/>
    <property type="match status" value="1"/>
</dbReference>
<dbReference type="HAMAP" id="MF_00600">
    <property type="entry name" value="CH60"/>
    <property type="match status" value="1"/>
</dbReference>
<dbReference type="InterPro" id="IPR018370">
    <property type="entry name" value="Chaperonin_Cpn60_CS"/>
</dbReference>
<dbReference type="InterPro" id="IPR001844">
    <property type="entry name" value="Cpn60/GroEL"/>
</dbReference>
<dbReference type="InterPro" id="IPR002423">
    <property type="entry name" value="Cpn60/GroEL/TCP-1"/>
</dbReference>
<dbReference type="InterPro" id="IPR027409">
    <property type="entry name" value="GroEL-like_apical_dom_sf"/>
</dbReference>
<dbReference type="InterPro" id="IPR027413">
    <property type="entry name" value="GROEL-like_equatorial_sf"/>
</dbReference>
<dbReference type="InterPro" id="IPR027410">
    <property type="entry name" value="TCP-1-like_intermed_sf"/>
</dbReference>
<dbReference type="NCBIfam" id="TIGR02348">
    <property type="entry name" value="GroEL"/>
    <property type="match status" value="1"/>
</dbReference>
<dbReference type="NCBIfam" id="NF000592">
    <property type="entry name" value="PRK00013.1"/>
    <property type="match status" value="1"/>
</dbReference>
<dbReference type="NCBIfam" id="NF009487">
    <property type="entry name" value="PRK12849.1"/>
    <property type="match status" value="1"/>
</dbReference>
<dbReference type="NCBIfam" id="NF009488">
    <property type="entry name" value="PRK12850.1"/>
    <property type="match status" value="1"/>
</dbReference>
<dbReference type="NCBIfam" id="NF009489">
    <property type="entry name" value="PRK12851.1"/>
    <property type="match status" value="1"/>
</dbReference>
<dbReference type="PANTHER" id="PTHR45633">
    <property type="entry name" value="60 KDA HEAT SHOCK PROTEIN, MITOCHONDRIAL"/>
    <property type="match status" value="1"/>
</dbReference>
<dbReference type="Pfam" id="PF00118">
    <property type="entry name" value="Cpn60_TCP1"/>
    <property type="match status" value="1"/>
</dbReference>
<dbReference type="PRINTS" id="PR00298">
    <property type="entry name" value="CHAPERONIN60"/>
</dbReference>
<dbReference type="SUPFAM" id="SSF52029">
    <property type="entry name" value="GroEL apical domain-like"/>
    <property type="match status" value="1"/>
</dbReference>
<dbReference type="SUPFAM" id="SSF48592">
    <property type="entry name" value="GroEL equatorial domain-like"/>
    <property type="match status" value="2"/>
</dbReference>
<dbReference type="PROSITE" id="PS00296">
    <property type="entry name" value="CHAPERONINS_CPN60"/>
    <property type="match status" value="1"/>
</dbReference>
<feature type="chain" id="PRO_0000063352" description="Chaperonin GroEL 1">
    <location>
        <begin position="1"/>
        <end position="538"/>
    </location>
</feature>
<feature type="binding site" evidence="1">
    <location>
        <begin position="29"/>
        <end position="32"/>
    </location>
    <ligand>
        <name>ATP</name>
        <dbReference type="ChEBI" id="CHEBI:30616"/>
    </ligand>
</feature>
<feature type="binding site" evidence="1">
    <location>
        <begin position="86"/>
        <end position="90"/>
    </location>
    <ligand>
        <name>ATP</name>
        <dbReference type="ChEBI" id="CHEBI:30616"/>
    </ligand>
</feature>
<feature type="binding site" evidence="1">
    <location>
        <position position="413"/>
    </location>
    <ligand>
        <name>ATP</name>
        <dbReference type="ChEBI" id="CHEBI:30616"/>
    </ligand>
</feature>
<feature type="binding site" evidence="1">
    <location>
        <begin position="478"/>
        <end position="480"/>
    </location>
    <ligand>
        <name>ATP</name>
        <dbReference type="ChEBI" id="CHEBI:30616"/>
    </ligand>
</feature>
<feature type="binding site" evidence="1">
    <location>
        <position position="494"/>
    </location>
    <ligand>
        <name>ATP</name>
        <dbReference type="ChEBI" id="CHEBI:30616"/>
    </ligand>
</feature>
<evidence type="ECO:0000255" key="1">
    <source>
        <dbReference type="HAMAP-Rule" id="MF_00600"/>
    </source>
</evidence>
<comment type="function">
    <text evidence="1">Together with its co-chaperonin GroES, plays an essential role in assisting protein folding. The GroEL-GroES system forms a nano-cage that allows encapsulation of the non-native substrate proteins and provides a physical environment optimized to promote and accelerate protein folding.</text>
</comment>
<comment type="catalytic activity">
    <reaction evidence="1">
        <text>ATP + H2O + a folded polypeptide = ADP + phosphate + an unfolded polypeptide.</text>
        <dbReference type="EC" id="5.6.1.7"/>
    </reaction>
</comment>
<comment type="subunit">
    <text evidence="1">Forms a cylinder of 14 subunits composed of two heptameric rings stacked back-to-back. Interacts with the co-chaperonin GroES.</text>
</comment>
<comment type="subcellular location">
    <subcellularLocation>
        <location evidence="1">Cytoplasm</location>
    </subcellularLocation>
</comment>
<comment type="similarity">
    <text evidence="1">Belongs to the chaperonin (HSP60) family.</text>
</comment>
<gene>
    <name evidence="1" type="primary">groEL1</name>
    <name evidence="1" type="synonym">groL1</name>
    <name type="ordered locus">Cgl0598</name>
    <name type="ordered locus">cg0693</name>
</gene>
<protein>
    <recommendedName>
        <fullName evidence="1">Chaperonin GroEL 1</fullName>
        <ecNumber evidence="1">5.6.1.7</ecNumber>
    </recommendedName>
    <alternativeName>
        <fullName evidence="1">60 kDa chaperonin 1</fullName>
    </alternativeName>
    <alternativeName>
        <fullName evidence="1">Chaperonin-60 1</fullName>
        <shortName evidence="1">Cpn60 1</shortName>
    </alternativeName>
</protein>
<keyword id="KW-0067">ATP-binding</keyword>
<keyword id="KW-0143">Chaperone</keyword>
<keyword id="KW-0963">Cytoplasm</keyword>
<keyword id="KW-0413">Isomerase</keyword>
<keyword id="KW-0547">Nucleotide-binding</keyword>
<keyword id="KW-1185">Reference proteome</keyword>
<name>CH601_CORGL</name>
<accession>Q8NSS0</accession>
<organism>
    <name type="scientific">Corynebacterium glutamicum (strain ATCC 13032 / DSM 20300 / JCM 1318 / BCRC 11384 / CCUG 27702 / LMG 3730 / NBRC 12168 / NCIMB 10025 / NRRL B-2784 / 534)</name>
    <dbReference type="NCBI Taxonomy" id="196627"/>
    <lineage>
        <taxon>Bacteria</taxon>
        <taxon>Bacillati</taxon>
        <taxon>Actinomycetota</taxon>
        <taxon>Actinomycetes</taxon>
        <taxon>Mycobacteriales</taxon>
        <taxon>Corynebacteriaceae</taxon>
        <taxon>Corynebacterium</taxon>
    </lineage>
</organism>